<gene>
    <name type="primary">NTE1</name>
    <name type="ORF">MGG_06143</name>
</gene>
<evidence type="ECO:0000250" key="1"/>
<evidence type="ECO:0000255" key="2"/>
<evidence type="ECO:0000255" key="3">
    <source>
        <dbReference type="PROSITE-ProRule" id="PRU01161"/>
    </source>
</evidence>
<evidence type="ECO:0000256" key="4">
    <source>
        <dbReference type="SAM" id="MobiDB-lite"/>
    </source>
</evidence>
<evidence type="ECO:0000305" key="5"/>
<dbReference type="EC" id="3.1.1.5"/>
<dbReference type="EMBL" id="CM001233">
    <property type="protein sequence ID" value="EHA52211.1"/>
    <property type="molecule type" value="Genomic_DNA"/>
</dbReference>
<dbReference type="RefSeq" id="XP_003712018.1">
    <property type="nucleotide sequence ID" value="XM_003711970.1"/>
</dbReference>
<dbReference type="SMR" id="A4QVZ8"/>
<dbReference type="FunCoup" id="A4QVZ8">
    <property type="interactions" value="113"/>
</dbReference>
<dbReference type="STRING" id="242507.A4QVZ8"/>
<dbReference type="EnsemblFungi" id="MGG_06143T0">
    <property type="protein sequence ID" value="MGG_06143T0"/>
    <property type="gene ID" value="MGG_06143"/>
</dbReference>
<dbReference type="GeneID" id="2684255"/>
<dbReference type="KEGG" id="mgr:MGG_06143"/>
<dbReference type="VEuPathDB" id="FungiDB:MGG_06143"/>
<dbReference type="eggNOG" id="KOG2968">
    <property type="taxonomic scope" value="Eukaryota"/>
</dbReference>
<dbReference type="HOGENOM" id="CLU_000960_1_1_1"/>
<dbReference type="InParanoid" id="A4QVZ8"/>
<dbReference type="OMA" id="SSGYVWR"/>
<dbReference type="OrthoDB" id="421051at2759"/>
<dbReference type="Proteomes" id="UP000009058">
    <property type="component" value="Chromosome 3"/>
</dbReference>
<dbReference type="GO" id="GO:0005789">
    <property type="term" value="C:endoplasmic reticulum membrane"/>
    <property type="evidence" value="ECO:0007669"/>
    <property type="project" value="UniProtKB-SubCell"/>
</dbReference>
<dbReference type="GO" id="GO:0004622">
    <property type="term" value="F:lysophospholipase activity"/>
    <property type="evidence" value="ECO:0007669"/>
    <property type="project" value="UniProtKB-EC"/>
</dbReference>
<dbReference type="GO" id="GO:0034638">
    <property type="term" value="P:phosphatidylcholine catabolic process"/>
    <property type="evidence" value="ECO:0007669"/>
    <property type="project" value="EnsemblFungi"/>
</dbReference>
<dbReference type="GO" id="GO:0071071">
    <property type="term" value="P:regulation of phospholipid biosynthetic process"/>
    <property type="evidence" value="ECO:0007669"/>
    <property type="project" value="EnsemblFungi"/>
</dbReference>
<dbReference type="CDD" id="cd00038">
    <property type="entry name" value="CAP_ED"/>
    <property type="match status" value="2"/>
</dbReference>
<dbReference type="FunFam" id="2.60.120.10:FF:000062">
    <property type="entry name" value="Lysophospholipase NTE1"/>
    <property type="match status" value="1"/>
</dbReference>
<dbReference type="FunFam" id="3.40.1090.10:FF:000007">
    <property type="entry name" value="Lysophospholipase NTE1"/>
    <property type="match status" value="1"/>
</dbReference>
<dbReference type="FunFam" id="3.40.1090.10:FF:000018">
    <property type="entry name" value="Lysophospholipase NTE1"/>
    <property type="match status" value="1"/>
</dbReference>
<dbReference type="Gene3D" id="3.40.1090.10">
    <property type="entry name" value="Cytosolic phospholipase A2 catalytic domain"/>
    <property type="match status" value="2"/>
</dbReference>
<dbReference type="Gene3D" id="2.60.120.10">
    <property type="entry name" value="Jelly Rolls"/>
    <property type="match status" value="3"/>
</dbReference>
<dbReference type="InterPro" id="IPR016035">
    <property type="entry name" value="Acyl_Trfase/lysoPLipase"/>
</dbReference>
<dbReference type="InterPro" id="IPR000595">
    <property type="entry name" value="cNMP-bd_dom"/>
</dbReference>
<dbReference type="InterPro" id="IPR018490">
    <property type="entry name" value="cNMP-bd_dom_sf"/>
</dbReference>
<dbReference type="InterPro" id="IPR001423">
    <property type="entry name" value="LysoPLipase_patatin_CS"/>
</dbReference>
<dbReference type="InterPro" id="IPR050301">
    <property type="entry name" value="NTE"/>
</dbReference>
<dbReference type="InterPro" id="IPR056556">
    <property type="entry name" value="NTE1_P-loop_dom"/>
</dbReference>
<dbReference type="InterPro" id="IPR002641">
    <property type="entry name" value="PNPLA_dom"/>
</dbReference>
<dbReference type="InterPro" id="IPR014710">
    <property type="entry name" value="RmlC-like_jellyroll"/>
</dbReference>
<dbReference type="PANTHER" id="PTHR14226:SF29">
    <property type="entry name" value="NEUROPATHY TARGET ESTERASE SWS"/>
    <property type="match status" value="1"/>
</dbReference>
<dbReference type="PANTHER" id="PTHR14226">
    <property type="entry name" value="NEUROPATHY TARGET ESTERASE/SWISS CHEESE D.MELANOGASTER"/>
    <property type="match status" value="1"/>
</dbReference>
<dbReference type="Pfam" id="PF00027">
    <property type="entry name" value="cNMP_binding"/>
    <property type="match status" value="1"/>
</dbReference>
<dbReference type="Pfam" id="PF24179">
    <property type="entry name" value="NTE_Ploop"/>
    <property type="match status" value="1"/>
</dbReference>
<dbReference type="Pfam" id="PF01734">
    <property type="entry name" value="Patatin"/>
    <property type="match status" value="1"/>
</dbReference>
<dbReference type="SMART" id="SM00100">
    <property type="entry name" value="cNMP"/>
    <property type="match status" value="1"/>
</dbReference>
<dbReference type="SUPFAM" id="SSF51206">
    <property type="entry name" value="cAMP-binding domain-like"/>
    <property type="match status" value="3"/>
</dbReference>
<dbReference type="SUPFAM" id="SSF52151">
    <property type="entry name" value="FabD/lysophospholipase-like"/>
    <property type="match status" value="1"/>
</dbReference>
<dbReference type="PROSITE" id="PS50042">
    <property type="entry name" value="CNMP_BINDING_3"/>
    <property type="match status" value="2"/>
</dbReference>
<dbReference type="PROSITE" id="PS51635">
    <property type="entry name" value="PNPLA"/>
    <property type="match status" value="1"/>
</dbReference>
<dbReference type="PROSITE" id="PS01237">
    <property type="entry name" value="UPF0028"/>
    <property type="match status" value="1"/>
</dbReference>
<sequence>MDSSTAALATASAKLDAVAQQGSSSWIGFFANIILGIISLVYSILYSVLKLTTFSIPSLLYTLFSTSLTVTMNATTLMLIIVLVFSLVSWFVRYRYLNMYSRLPPEPQRKEPDVDLFPDTHPGGSKPGLSNYLDEFLSAIKIFGYLERPVFHELTRSMQTRKLIAGETFNLEEEKGFCMVVDGLVEIFVKSARTGQHPVGESCSIDSDGSDEHEEYQAGNQRYQLLTEVHNGAPMSSLFSIMSLFTEDIKLRHGGDEGGEPTSATETYTSSRYGLGNDFSDQRESTVSVPTTPQLERSSSHGPTLHDGDANPSMGGRVPASIPPMSLDPPLQSRPKRPTTSRHATTSVHPDIIARATVDTTIAIIPASAFRRLIQIYPKYTAHIVHVILSRFQRVTLATAYNYLGLTSEVLHIEKSMIDNATCQLPNFLRGDALTRLKEKFNHERERIGEKDCTKGIALHNSSTGRRRKSTASLRKEAALQAITHGQRPSSVTASPPLQPRESGNKHTSNSGDLLMNIQLSRNGGRRSTSNMDPLTRQSTLLGSLETEVVSPLSQRTSNPFETRRHAHISLNKRETRDEDGLFRESILECMFKAIGLTANGTGAREPDSADASPRLTSYDQIRRGGYSSHNAFGFIDPYGGSVDGDADSITSGGTGPGLPVNPHALAHDMRDEVEIVFFPSGSVLVEQGERNPGLYYVVDGFLDVCMSAADESSGDILKASKNESSLNIGPGNQQGSAGRDRFMDANLGQSSSRKRASNVRRNVALIKPGGLAGYVGSISSHRSFIDVVAKTDVYVGFLPRQSLERIVDRYPIVLLTMAKRLTNLLPKLILHIDFALEWLQVNAGEVIFHGGEESEAIYIVLNGRLRLVEDRQEGGVDVRGEFGQGESIGELEVLTESARSGTLHAIRNTELVKFPRTLFNSLAQEHPNITIKISKIIASRMRKVVDDPSTFVGKEGALKASLNKSSSTLNLRTVAILPVTSGVPVVEFGNRLMGALTQVGTPNGATSLSQSAILNHLGRHAFNKMGKLKLSQYLADLEEKYGLVMYVADTNVNSPWTQTCITQADCILLVGLAEGSPEIGEYERFMLGMKSTARKVLVLLHADRYAEPGLTRSWLRNRMWINGGHHHVQMAFRTQSVPINPTAKRTGPSLKERVQILQAEIQKYTSRKVRHSPFYSPDAPFKGDFHRLARRLCGKSVGLVLGGGGARGLAHIGIIRAMEESGIPIDIVGGTSIGSFVGALYARHADVVPIFGLSKKFAGRMASVWRFALDLTYPSASYTTGHEFNRGIFKTFGKAQIEDFWLEFYCNTTNISKSRQEIHTSGYAWRYVRASMSLAGLLPPLCDEGSMLLDGGYIDNLTVSHMKSLGVDIIFAVDVGSLDDDVPQAYGDTLSGLWAFVNRWNPLSSTPNPPTLAEIQARLAYVSSVDALERAKMTPGCVYMRPPIDEYGTLEFGRFDEIVQVGYKYGLEFLQKLRDEGALPVVEETEAKKALRRTMAPRRASI</sequence>
<keyword id="KW-0256">Endoplasmic reticulum</keyword>
<keyword id="KW-0378">Hydrolase</keyword>
<keyword id="KW-0442">Lipid degradation</keyword>
<keyword id="KW-0443">Lipid metabolism</keyword>
<keyword id="KW-0472">Membrane</keyword>
<keyword id="KW-1185">Reference proteome</keyword>
<keyword id="KW-0677">Repeat</keyword>
<keyword id="KW-0812">Transmembrane</keyword>
<keyword id="KW-1133">Transmembrane helix</keyword>
<reference key="1">
    <citation type="journal article" date="2005" name="Nature">
        <title>The genome sequence of the rice blast fungus Magnaporthe grisea.</title>
        <authorList>
            <person name="Dean R.A."/>
            <person name="Talbot N.J."/>
            <person name="Ebbole D.J."/>
            <person name="Farman M.L."/>
            <person name="Mitchell T.K."/>
            <person name="Orbach M.J."/>
            <person name="Thon M.R."/>
            <person name="Kulkarni R."/>
            <person name="Xu J.-R."/>
            <person name="Pan H."/>
            <person name="Read N.D."/>
            <person name="Lee Y.-H."/>
            <person name="Carbone I."/>
            <person name="Brown D."/>
            <person name="Oh Y.Y."/>
            <person name="Donofrio N."/>
            <person name="Jeong J.S."/>
            <person name="Soanes D.M."/>
            <person name="Djonovic S."/>
            <person name="Kolomiets E."/>
            <person name="Rehmeyer C."/>
            <person name="Li W."/>
            <person name="Harding M."/>
            <person name="Kim S."/>
            <person name="Lebrun M.-H."/>
            <person name="Bohnert H."/>
            <person name="Coughlan S."/>
            <person name="Butler J."/>
            <person name="Calvo S.E."/>
            <person name="Ma L.-J."/>
            <person name="Nicol R."/>
            <person name="Purcell S."/>
            <person name="Nusbaum C."/>
            <person name="Galagan J.E."/>
            <person name="Birren B.W."/>
        </authorList>
    </citation>
    <scope>NUCLEOTIDE SEQUENCE [LARGE SCALE GENOMIC DNA]</scope>
    <source>
        <strain>70-15 / ATCC MYA-4617 / FGSC 8958</strain>
    </source>
</reference>
<feature type="chain" id="PRO_0000295324" description="Lysophospholipase NTE1">
    <location>
        <begin position="1"/>
        <end position="1503"/>
    </location>
</feature>
<feature type="topological domain" description="Cytoplasmic" evidence="1">
    <location>
        <begin position="1"/>
        <end position="25"/>
    </location>
</feature>
<feature type="transmembrane region" description="Helical" evidence="2">
    <location>
        <begin position="26"/>
        <end position="46"/>
    </location>
</feature>
<feature type="topological domain" description="Lumenal" evidence="1">
    <location>
        <begin position="47"/>
        <end position="71"/>
    </location>
</feature>
<feature type="transmembrane region" description="Helical" evidence="2">
    <location>
        <begin position="72"/>
        <end position="92"/>
    </location>
</feature>
<feature type="topological domain" description="Cytoplasmic" evidence="1">
    <location>
        <begin position="93"/>
        <end position="1503"/>
    </location>
</feature>
<feature type="domain" description="PNPLA" evidence="3">
    <location>
        <begin position="1200"/>
        <end position="1364"/>
    </location>
</feature>
<feature type="region of interest" description="Disordered" evidence="4">
    <location>
        <begin position="252"/>
        <end position="348"/>
    </location>
</feature>
<feature type="region of interest" description="Disordered" evidence="4">
    <location>
        <begin position="454"/>
        <end position="561"/>
    </location>
</feature>
<feature type="region of interest" description="Disordered" evidence="4">
    <location>
        <begin position="722"/>
        <end position="745"/>
    </location>
</feature>
<feature type="short sequence motif" description="GXGXXG" evidence="3">
    <location>
        <begin position="1204"/>
        <end position="1209"/>
    </location>
</feature>
<feature type="short sequence motif" description="GXSXG" evidence="3">
    <location>
        <begin position="1231"/>
        <end position="1235"/>
    </location>
</feature>
<feature type="short sequence motif" description="DGA/G" evidence="3">
    <location>
        <begin position="1351"/>
        <end position="1353"/>
    </location>
</feature>
<feature type="compositionally biased region" description="Polar residues" evidence="4">
    <location>
        <begin position="262"/>
        <end position="272"/>
    </location>
</feature>
<feature type="compositionally biased region" description="Polar residues" evidence="4">
    <location>
        <begin position="285"/>
        <end position="302"/>
    </location>
</feature>
<feature type="compositionally biased region" description="Polar residues" evidence="4">
    <location>
        <begin position="487"/>
        <end position="496"/>
    </location>
</feature>
<feature type="compositionally biased region" description="Polar residues" evidence="4">
    <location>
        <begin position="506"/>
        <end position="542"/>
    </location>
</feature>
<feature type="compositionally biased region" description="Polar residues" evidence="4">
    <location>
        <begin position="552"/>
        <end position="561"/>
    </location>
</feature>
<feature type="compositionally biased region" description="Polar residues" evidence="4">
    <location>
        <begin position="723"/>
        <end position="737"/>
    </location>
</feature>
<feature type="active site" description="Nucleophile" evidence="3">
    <location>
        <position position="1233"/>
    </location>
</feature>
<feature type="active site" description="Proton acceptor" evidence="3">
    <location>
        <position position="1351"/>
    </location>
</feature>
<feature type="binding site">
    <location>
        <begin position="658"/>
        <end position="777"/>
    </location>
    <ligand>
        <name>a nucleoside 3',5'-cyclic phosphate</name>
        <dbReference type="ChEBI" id="CHEBI:58464"/>
        <label>1</label>
    </ligand>
</feature>
<feature type="binding site">
    <location>
        <begin position="821"/>
        <end position="941"/>
    </location>
    <ligand>
        <name>a nucleoside 3',5'-cyclic phosphate</name>
        <dbReference type="ChEBI" id="CHEBI:58464"/>
        <label>2</label>
    </ligand>
</feature>
<comment type="function">
    <text evidence="1">Intracellular phospholipase B that catalyzes the double deacylation of phosphatidylcholine (PC) to glycerophosphocholine (GroPCho). Plays an important role in membrane lipid homeostasis. Responsible for the rapid PC turnover in response to inositol, elevated temperatures, or when choline is present in the growth medium (By similarity).</text>
</comment>
<comment type="catalytic activity">
    <reaction>
        <text>a 1-acyl-sn-glycero-3-phosphocholine + H2O = sn-glycerol 3-phosphocholine + a fatty acid + H(+)</text>
        <dbReference type="Rhea" id="RHEA:15177"/>
        <dbReference type="ChEBI" id="CHEBI:15377"/>
        <dbReference type="ChEBI" id="CHEBI:15378"/>
        <dbReference type="ChEBI" id="CHEBI:16870"/>
        <dbReference type="ChEBI" id="CHEBI:28868"/>
        <dbReference type="ChEBI" id="CHEBI:58168"/>
        <dbReference type="EC" id="3.1.1.5"/>
    </reaction>
</comment>
<comment type="activity regulation">
    <text evidence="1">Inhibited by organophosphorus esters.</text>
</comment>
<comment type="subcellular location">
    <subcellularLocation>
        <location evidence="1">Endoplasmic reticulum membrane</location>
        <topology evidence="1">Multi-pass membrane protein</topology>
    </subcellularLocation>
</comment>
<comment type="similarity">
    <text evidence="5">Belongs to the NTE family.</text>
</comment>
<name>NTE1_PYRO7</name>
<organism>
    <name type="scientific">Pyricularia oryzae (strain 70-15 / ATCC MYA-4617 / FGSC 8958)</name>
    <name type="common">Rice blast fungus</name>
    <name type="synonym">Magnaporthe oryzae</name>
    <dbReference type="NCBI Taxonomy" id="242507"/>
    <lineage>
        <taxon>Eukaryota</taxon>
        <taxon>Fungi</taxon>
        <taxon>Dikarya</taxon>
        <taxon>Ascomycota</taxon>
        <taxon>Pezizomycotina</taxon>
        <taxon>Sordariomycetes</taxon>
        <taxon>Sordariomycetidae</taxon>
        <taxon>Magnaporthales</taxon>
        <taxon>Pyriculariaceae</taxon>
        <taxon>Pyricularia</taxon>
    </lineage>
</organism>
<accession>A4QVZ8</accession>
<accession>G4N5L8</accession>
<proteinExistence type="inferred from homology"/>
<protein>
    <recommendedName>
        <fullName>Lysophospholipase NTE1</fullName>
        <ecNumber>3.1.1.5</ecNumber>
    </recommendedName>
    <alternativeName>
        <fullName>Intracellular phospholipase B</fullName>
    </alternativeName>
    <alternativeName>
        <fullName>Neuropathy target esterase homolog</fullName>
    </alternativeName>
</protein>